<protein>
    <recommendedName>
        <fullName>von Willebrand factor A domain-containing protein 3B</fullName>
        <shortName>VWA domain-containing protein 3B</shortName>
    </recommendedName>
</protein>
<organism>
    <name type="scientific">Homo sapiens</name>
    <name type="common">Human</name>
    <dbReference type="NCBI Taxonomy" id="9606"/>
    <lineage>
        <taxon>Eukaryota</taxon>
        <taxon>Metazoa</taxon>
        <taxon>Chordata</taxon>
        <taxon>Craniata</taxon>
        <taxon>Vertebrata</taxon>
        <taxon>Euteleostomi</taxon>
        <taxon>Mammalia</taxon>
        <taxon>Eutheria</taxon>
        <taxon>Euarchontoglires</taxon>
        <taxon>Primates</taxon>
        <taxon>Haplorrhini</taxon>
        <taxon>Catarrhini</taxon>
        <taxon>Hominidae</taxon>
        <taxon>Homo</taxon>
    </lineage>
</organism>
<sequence>MEKSGPSSTISEQQLQRQEGWINTKTDLAEQSLISSEKWLQLHGLKSNKLTLKQILSQIGFPHCEDYVASLGRPVASRYADGLFPQLYRAEDGRVYNLTAKSELIYQFVEHLTQAVESYKQRMDWLTSKSRQIFGVILEQCVTIVLDFGGILEGELDLCREALTMVLQEQVAHITEFNIIRVSQEPVKWQENATPVTEQSIATAISWVEKLTVELTVSEAGRLDALLEAGRDKTIESIYYFVVGDVPEESKELLLQRALEIPCPVYTVSFNARGEGTIAFLKDLSAKTHSRFHAFAERTECVEFPAFSTKDGDNVMTWNSRKLKGKLPPGAGVREDVFLVWQEMEEACSTLAQIQRLVAEPPKPDVATVDCESETTSVEIASNPEDTWDSKTWLQKYGLKAQKLSLYDVLADCSFRHADGVVDIKAKPENESVQTSAETNKKTVHAKYCSRFVHAPWKDGSLVHVNITKEKCKWYSERIHTALARIRRRIKWLQDGSQSLFGRLHNDCIYILIDTSHSMKSKLDLVKDKIIQFIQEQLKYKSKFNFVKFDGQAVAWREQLAEVNEDNLEQAQSWIRDIKIGSSTNTLSALKTAFADKETQAIYLLTDGRPDQPPETVIDQVKRFQEIPIYTISFNYNDEIANRFLKEVAALTGGEFHFYNFGCKDPTPPEAVQNEDLTLLVKEMEQGHSDLEKMQDLYSESLIMDWWYNAEKDGDSKHQKEICSMISTPEKCAKPQSDVDSTQTSSLNMLKGPWGLSDQKVQKKKVLHAESTKTSLLRSQMSSLRSSACSERKDGLSNASSRRTALSDKEMSILLAEEWLDDKSSEKVTREGSQVYDHDSSDVSSENWLKTYGLVAKKLTLMDALSVAAVPHSSTYVPVLDKHVVSKVFDEVFPLAHVCNDTNKMTLINPQGAKLNIYKRKVEQAIQSYEKRLNKIVWRALSQEEKEKLDANKPIQYLENKTVLNQALERLNWPISLKELSMLESEILAGKMYIQQAMELQEAAKKNYANKAPGEQQKLQGNPTKKTKSKRPDPLKGQKVIARCDENGFYFPGVVKKCVSRTQALVGFSYGDTKVVSTSFITPVGGAMPCPLLQVGDYVFAKIVIPKGFDFYVPAIVIALPNKHVATEKFYTVLKCNNRREFCPRSALIKISQNKYALSCSHIKSPPIPEDPEVEDVEARNSAFLFWPLKEADTQDSREPRREKPRRKKRPAKQPLQQAAPSDSDGSSHGISSHGSCQGTHPEPRTAHLHFPAAGRLGLSSHAIIATPPPRAALPCTLQATHSSKGLRSVPETL</sequence>
<comment type="subcellular location">
    <subcellularLocation>
        <location evidence="6">Cytoplasm</location>
    </subcellularLocation>
</comment>
<comment type="alternative products">
    <event type="alternative splicing"/>
    <isoform>
        <id>Q502W6-1</id>
        <name>1</name>
        <sequence type="displayed"/>
    </isoform>
    <isoform>
        <id>Q502W6-2</id>
        <name>2</name>
        <sequence type="described" ref="VSP_033838 VSP_033839"/>
    </isoform>
    <isoform>
        <id>Q502W6-3</id>
        <name>3</name>
        <sequence type="described" ref="VSP_033834 VSP_033840"/>
    </isoform>
    <isoform>
        <id>Q502W6-4</id>
        <name>4</name>
        <sequence type="described" ref="VSP_033834 VSP_033840 VSP_033843"/>
    </isoform>
    <isoform>
        <id>Q502W6-5</id>
        <name>5</name>
        <sequence type="described" ref="VSP_033836 VSP_033837"/>
    </isoform>
    <isoform>
        <id>Q502W6-6</id>
        <name>6</name>
        <sequence type="described" ref="VSP_033844"/>
    </isoform>
    <isoform>
        <id>Q502W6-7</id>
        <name>7</name>
        <sequence type="described" ref="VSP_033835"/>
    </isoform>
    <isoform>
        <id>Q502W6-8</id>
        <name>8</name>
        <sequence type="described" ref="VSP_033841 VSP_033842"/>
    </isoform>
</comment>
<comment type="disease" evidence="6">
    <disease id="DI-04713">
        <name>Spinocerebellar ataxia, autosomal recessive, 22</name>
        <acronym>SCAR22</acronym>
        <description>A form of spinocerebellar ataxia, a clinically and genetically heterogeneous group of cerebellar disorders due to degeneration of the cerebellum with variable involvement of the brainstem and spinal cord. SCAR22 patients manifest variable severity of intellectual disability associated with adult-onset cerebellar ataxia.</description>
        <dbReference type="MIM" id="616948"/>
    </disease>
    <text>The disease may be caused by variants affecting the gene represented in this entry.</text>
</comment>
<comment type="sequence caution" evidence="11">
    <conflict type="erroneous initiation">
        <sequence resource="EMBL-CDS" id="BAC04047"/>
    </conflict>
    <text>Truncated N-terminus.</text>
</comment>
<comment type="sequence caution" evidence="11">
    <conflict type="frameshift">
        <sequence resource="EMBL-CDS" id="CAD89964"/>
    </conflict>
</comment>
<comment type="sequence caution" evidence="11">
    <molecule>Isoform 8</molecule>
    <conflict type="frameshift">
        <sequence resource="EMBL-CDS" id="CAD89964"/>
    </conflict>
</comment>
<gene>
    <name type="primary">VWA3B</name>
</gene>
<proteinExistence type="evidence at protein level"/>
<keyword id="KW-0025">Alternative splicing</keyword>
<keyword id="KW-0963">Cytoplasm</keyword>
<keyword id="KW-0225">Disease variant</keyword>
<keyword id="KW-0991">Intellectual disability</keyword>
<keyword id="KW-0523">Neurodegeneration</keyword>
<keyword id="KW-1267">Proteomics identification</keyword>
<keyword id="KW-1185">Reference proteome</keyword>
<reference key="1">
    <citation type="journal article" date="2004" name="Nat. Genet.">
        <title>Complete sequencing and characterization of 21,243 full-length human cDNAs.</title>
        <authorList>
            <person name="Ota T."/>
            <person name="Suzuki Y."/>
            <person name="Nishikawa T."/>
            <person name="Otsuki T."/>
            <person name="Sugiyama T."/>
            <person name="Irie R."/>
            <person name="Wakamatsu A."/>
            <person name="Hayashi K."/>
            <person name="Sato H."/>
            <person name="Nagai K."/>
            <person name="Kimura K."/>
            <person name="Makita H."/>
            <person name="Sekine M."/>
            <person name="Obayashi M."/>
            <person name="Nishi T."/>
            <person name="Shibahara T."/>
            <person name="Tanaka T."/>
            <person name="Ishii S."/>
            <person name="Yamamoto J."/>
            <person name="Saito K."/>
            <person name="Kawai Y."/>
            <person name="Isono Y."/>
            <person name="Nakamura Y."/>
            <person name="Nagahari K."/>
            <person name="Murakami K."/>
            <person name="Yasuda T."/>
            <person name="Iwayanagi T."/>
            <person name="Wagatsuma M."/>
            <person name="Shiratori A."/>
            <person name="Sudo H."/>
            <person name="Hosoiri T."/>
            <person name="Kaku Y."/>
            <person name="Kodaira H."/>
            <person name="Kondo H."/>
            <person name="Sugawara M."/>
            <person name="Takahashi M."/>
            <person name="Kanda K."/>
            <person name="Yokoi T."/>
            <person name="Furuya T."/>
            <person name="Kikkawa E."/>
            <person name="Omura Y."/>
            <person name="Abe K."/>
            <person name="Kamihara K."/>
            <person name="Katsuta N."/>
            <person name="Sato K."/>
            <person name="Tanikawa M."/>
            <person name="Yamazaki M."/>
            <person name="Ninomiya K."/>
            <person name="Ishibashi T."/>
            <person name="Yamashita H."/>
            <person name="Murakawa K."/>
            <person name="Fujimori K."/>
            <person name="Tanai H."/>
            <person name="Kimata M."/>
            <person name="Watanabe M."/>
            <person name="Hiraoka S."/>
            <person name="Chiba Y."/>
            <person name="Ishida S."/>
            <person name="Ono Y."/>
            <person name="Takiguchi S."/>
            <person name="Watanabe S."/>
            <person name="Yosida M."/>
            <person name="Hotuta T."/>
            <person name="Kusano J."/>
            <person name="Kanehori K."/>
            <person name="Takahashi-Fujii A."/>
            <person name="Hara H."/>
            <person name="Tanase T.-O."/>
            <person name="Nomura Y."/>
            <person name="Togiya S."/>
            <person name="Komai F."/>
            <person name="Hara R."/>
            <person name="Takeuchi K."/>
            <person name="Arita M."/>
            <person name="Imose N."/>
            <person name="Musashino K."/>
            <person name="Yuuki H."/>
            <person name="Oshima A."/>
            <person name="Sasaki N."/>
            <person name="Aotsuka S."/>
            <person name="Yoshikawa Y."/>
            <person name="Matsunawa H."/>
            <person name="Ichihara T."/>
            <person name="Shiohata N."/>
            <person name="Sano S."/>
            <person name="Moriya S."/>
            <person name="Momiyama H."/>
            <person name="Satoh N."/>
            <person name="Takami S."/>
            <person name="Terashima Y."/>
            <person name="Suzuki O."/>
            <person name="Nakagawa S."/>
            <person name="Senoh A."/>
            <person name="Mizoguchi H."/>
            <person name="Goto Y."/>
            <person name="Shimizu F."/>
            <person name="Wakebe H."/>
            <person name="Hishigaki H."/>
            <person name="Watanabe T."/>
            <person name="Sugiyama A."/>
            <person name="Takemoto M."/>
            <person name="Kawakami B."/>
            <person name="Yamazaki M."/>
            <person name="Watanabe K."/>
            <person name="Kumagai A."/>
            <person name="Itakura S."/>
            <person name="Fukuzumi Y."/>
            <person name="Fujimori Y."/>
            <person name="Komiyama M."/>
            <person name="Tashiro H."/>
            <person name="Tanigami A."/>
            <person name="Fujiwara T."/>
            <person name="Ono T."/>
            <person name="Yamada K."/>
            <person name="Fujii Y."/>
            <person name="Ozaki K."/>
            <person name="Hirao M."/>
            <person name="Ohmori Y."/>
            <person name="Kawabata A."/>
            <person name="Hikiji T."/>
            <person name="Kobatake N."/>
            <person name="Inagaki H."/>
            <person name="Ikema Y."/>
            <person name="Okamoto S."/>
            <person name="Okitani R."/>
            <person name="Kawakami T."/>
            <person name="Noguchi S."/>
            <person name="Itoh T."/>
            <person name="Shigeta K."/>
            <person name="Senba T."/>
            <person name="Matsumura K."/>
            <person name="Nakajima Y."/>
            <person name="Mizuno T."/>
            <person name="Morinaga M."/>
            <person name="Sasaki M."/>
            <person name="Togashi T."/>
            <person name="Oyama M."/>
            <person name="Hata H."/>
            <person name="Watanabe M."/>
            <person name="Komatsu T."/>
            <person name="Mizushima-Sugano J."/>
            <person name="Satoh T."/>
            <person name="Shirai Y."/>
            <person name="Takahashi Y."/>
            <person name="Nakagawa K."/>
            <person name="Okumura K."/>
            <person name="Nagase T."/>
            <person name="Nomura N."/>
            <person name="Kikuchi H."/>
            <person name="Masuho Y."/>
            <person name="Yamashita R."/>
            <person name="Nakai K."/>
            <person name="Yada T."/>
            <person name="Nakamura Y."/>
            <person name="Ohara O."/>
            <person name="Isogai T."/>
            <person name="Sugano S."/>
        </authorList>
    </citation>
    <scope>NUCLEOTIDE SEQUENCE [LARGE SCALE MRNA] (ISOFORMS 2; 4 AND 7)</scope>
    <scope>NUCLEOTIDE SEQUENCE [LARGE SCALE MRNA] OF 591-1294 (ISOFORM 6)</scope>
    <scope>VARIANTS MET-885 AND LYS-1245</scope>
    <source>
        <tissue>Amygdala</tissue>
        <tissue>Testis</tissue>
    </source>
</reference>
<reference key="2">
    <citation type="journal article" date="2007" name="BMC Genomics">
        <title>The full-ORF clone resource of the German cDNA consortium.</title>
        <authorList>
            <person name="Bechtel S."/>
            <person name="Rosenfelder H."/>
            <person name="Duda A."/>
            <person name="Schmidt C.P."/>
            <person name="Ernst U."/>
            <person name="Wellenreuther R."/>
            <person name="Mehrle A."/>
            <person name="Schuster C."/>
            <person name="Bahr A."/>
            <person name="Bloecker H."/>
            <person name="Heubner D."/>
            <person name="Hoerlein A."/>
            <person name="Michel G."/>
            <person name="Wedler H."/>
            <person name="Koehrer K."/>
            <person name="Ottenwaelder B."/>
            <person name="Poustka A."/>
            <person name="Wiemann S."/>
            <person name="Schupp I."/>
        </authorList>
    </citation>
    <scope>NUCLEOTIDE SEQUENCE [LARGE SCALE MRNA] (ISOFORMS 5 AND 8)</scope>
    <scope>NUCLEOTIDE SEQUENCE [LARGE SCALE MRNA] OF 492-1294 (ISOFORM 1)</scope>
    <scope>VARIANTS VAL-677; MET-885 AND LYS-1245</scope>
    <source>
        <tissue>Spinal cord</tissue>
        <tissue>Testis</tissue>
    </source>
</reference>
<reference key="3">
    <citation type="journal article" date="2005" name="Nature">
        <title>Generation and annotation of the DNA sequences of human chromosomes 2 and 4.</title>
        <authorList>
            <person name="Hillier L.W."/>
            <person name="Graves T.A."/>
            <person name="Fulton R.S."/>
            <person name="Fulton L.A."/>
            <person name="Pepin K.H."/>
            <person name="Minx P."/>
            <person name="Wagner-McPherson C."/>
            <person name="Layman D."/>
            <person name="Wylie K."/>
            <person name="Sekhon M."/>
            <person name="Becker M.C."/>
            <person name="Fewell G.A."/>
            <person name="Delehaunty K.D."/>
            <person name="Miner T.L."/>
            <person name="Nash W.E."/>
            <person name="Kremitzki C."/>
            <person name="Oddy L."/>
            <person name="Du H."/>
            <person name="Sun H."/>
            <person name="Bradshaw-Cordum H."/>
            <person name="Ali J."/>
            <person name="Carter J."/>
            <person name="Cordes M."/>
            <person name="Harris A."/>
            <person name="Isak A."/>
            <person name="van Brunt A."/>
            <person name="Nguyen C."/>
            <person name="Du F."/>
            <person name="Courtney L."/>
            <person name="Kalicki J."/>
            <person name="Ozersky P."/>
            <person name="Abbott S."/>
            <person name="Armstrong J."/>
            <person name="Belter E.A."/>
            <person name="Caruso L."/>
            <person name="Cedroni M."/>
            <person name="Cotton M."/>
            <person name="Davidson T."/>
            <person name="Desai A."/>
            <person name="Elliott G."/>
            <person name="Erb T."/>
            <person name="Fronick C."/>
            <person name="Gaige T."/>
            <person name="Haakenson W."/>
            <person name="Haglund K."/>
            <person name="Holmes A."/>
            <person name="Harkins R."/>
            <person name="Kim K."/>
            <person name="Kruchowski S.S."/>
            <person name="Strong C.M."/>
            <person name="Grewal N."/>
            <person name="Goyea E."/>
            <person name="Hou S."/>
            <person name="Levy A."/>
            <person name="Martinka S."/>
            <person name="Mead K."/>
            <person name="McLellan M.D."/>
            <person name="Meyer R."/>
            <person name="Randall-Maher J."/>
            <person name="Tomlinson C."/>
            <person name="Dauphin-Kohlberg S."/>
            <person name="Kozlowicz-Reilly A."/>
            <person name="Shah N."/>
            <person name="Swearengen-Shahid S."/>
            <person name="Snider J."/>
            <person name="Strong J.T."/>
            <person name="Thompson J."/>
            <person name="Yoakum M."/>
            <person name="Leonard S."/>
            <person name="Pearman C."/>
            <person name="Trani L."/>
            <person name="Radionenko M."/>
            <person name="Waligorski J.E."/>
            <person name="Wang C."/>
            <person name="Rock S.M."/>
            <person name="Tin-Wollam A.-M."/>
            <person name="Maupin R."/>
            <person name="Latreille P."/>
            <person name="Wendl M.C."/>
            <person name="Yang S.-P."/>
            <person name="Pohl C."/>
            <person name="Wallis J.W."/>
            <person name="Spieth J."/>
            <person name="Bieri T.A."/>
            <person name="Berkowicz N."/>
            <person name="Nelson J.O."/>
            <person name="Osborne J."/>
            <person name="Ding L."/>
            <person name="Meyer R."/>
            <person name="Sabo A."/>
            <person name="Shotland Y."/>
            <person name="Sinha P."/>
            <person name="Wohldmann P.E."/>
            <person name="Cook L.L."/>
            <person name="Hickenbotham M.T."/>
            <person name="Eldred J."/>
            <person name="Williams D."/>
            <person name="Jones T.A."/>
            <person name="She X."/>
            <person name="Ciccarelli F.D."/>
            <person name="Izaurralde E."/>
            <person name="Taylor J."/>
            <person name="Schmutz J."/>
            <person name="Myers R.M."/>
            <person name="Cox D.R."/>
            <person name="Huang X."/>
            <person name="McPherson J.D."/>
            <person name="Mardis E.R."/>
            <person name="Clifton S.W."/>
            <person name="Warren W.C."/>
            <person name="Chinwalla A.T."/>
            <person name="Eddy S.R."/>
            <person name="Marra M.A."/>
            <person name="Ovcharenko I."/>
            <person name="Furey T.S."/>
            <person name="Miller W."/>
            <person name="Eichler E.E."/>
            <person name="Bork P."/>
            <person name="Suyama M."/>
            <person name="Torrents D."/>
            <person name="Waterston R.H."/>
            <person name="Wilson R.K."/>
        </authorList>
    </citation>
    <scope>NUCLEOTIDE SEQUENCE [LARGE SCALE GENOMIC DNA]</scope>
</reference>
<reference key="4">
    <citation type="journal article" date="2004" name="Genome Res.">
        <title>The status, quality, and expansion of the NIH full-length cDNA project: the Mammalian Gene Collection (MGC).</title>
        <authorList>
            <consortium name="The MGC Project Team"/>
        </authorList>
    </citation>
    <scope>NUCLEOTIDE SEQUENCE [LARGE SCALE MRNA] (ISOFORMS 1; 2 AND 3)</scope>
    <scope>VARIANT LYS-1245</scope>
    <source>
        <tissue>Brain</tissue>
        <tissue>Testis</tissue>
    </source>
</reference>
<reference key="5">
    <citation type="journal article" date="2016" name="J. Neurol. Neurosurg. Psych.">
        <title>A homozygous mutation of VWA3B causes cerebellar ataxia with intellectual disability.</title>
        <authorList>
            <person name="Kawarai T."/>
            <person name="Tajima A."/>
            <person name="Kuroda Y."/>
            <person name="Saji N."/>
            <person name="Orlacchio A."/>
            <person name="Terasawa H."/>
            <person name="Shimizu H."/>
            <person name="Kita Y."/>
            <person name="Izumi Y."/>
            <person name="Mitsui T."/>
            <person name="Imoto I."/>
            <person name="Kaji R."/>
        </authorList>
    </citation>
    <scope>VARIANT SCAR22 THR-622</scope>
    <scope>INVOLVEMENT IN SCAR22</scope>
    <scope>VARIANT TRP-181</scope>
    <scope>SUBCELLULAR LOCATION</scope>
</reference>
<reference key="6">
    <citation type="journal article" date="2016" name="J. Med. Genet.">
        <title>Homozygous missense mutation in the LMAN2L gene segregates with intellectual disability in a large consanguineous Pakistani family.</title>
        <authorList>
            <person name="Rafiullah R."/>
            <person name="Aslamkhan M."/>
            <person name="Paramasivam N."/>
            <person name="Thiel C."/>
            <person name="Mustafa G."/>
            <person name="Wiemann S."/>
            <person name="Schlesner M."/>
            <person name="Wade R.C."/>
            <person name="Rappold G.A."/>
            <person name="Berkel S."/>
        </authorList>
    </citation>
    <scope>VARIANT MET-42</scope>
</reference>
<accession>Q502W6</accession>
<accession>B9EK71</accession>
<accession>Q86T73</accession>
<accession>Q8N2D0</accession>
<accession>Q8N770</accession>
<accession>Q8NA79</accession>
<accession>Q8ND63</accession>
<accession>Q8ND65</accession>
<accession>Q8WW02</accession>
<evidence type="ECO:0000255" key="1">
    <source>
        <dbReference type="PROSITE-ProRule" id="PRU00219"/>
    </source>
</evidence>
<evidence type="ECO:0000256" key="2">
    <source>
        <dbReference type="SAM" id="MobiDB-lite"/>
    </source>
</evidence>
<evidence type="ECO:0000269" key="3">
    <source>
    </source>
</evidence>
<evidence type="ECO:0000269" key="4">
    <source>
    </source>
</evidence>
<evidence type="ECO:0000269" key="5">
    <source>
    </source>
</evidence>
<evidence type="ECO:0000269" key="6">
    <source>
    </source>
</evidence>
<evidence type="ECO:0000269" key="7">
    <source>
    </source>
</evidence>
<evidence type="ECO:0000303" key="8">
    <source>
    </source>
</evidence>
<evidence type="ECO:0000303" key="9">
    <source>
    </source>
</evidence>
<evidence type="ECO:0000303" key="10">
    <source>
    </source>
</evidence>
<evidence type="ECO:0000305" key="11"/>
<feature type="chain" id="PRO_0000337040" description="von Willebrand factor A domain-containing protein 3B">
    <location>
        <begin position="1"/>
        <end position="1294"/>
    </location>
</feature>
<feature type="domain" description="VWFA" evidence="1">
    <location>
        <begin position="508"/>
        <end position="684"/>
    </location>
</feature>
<feature type="region of interest" description="Disordered" evidence="2">
    <location>
        <begin position="732"/>
        <end position="754"/>
    </location>
</feature>
<feature type="region of interest" description="Disordered" evidence="2">
    <location>
        <begin position="778"/>
        <end position="803"/>
    </location>
</feature>
<feature type="region of interest" description="Disordered" evidence="2">
    <location>
        <begin position="1012"/>
        <end position="1036"/>
    </location>
</feature>
<feature type="region of interest" description="Disordered" evidence="2">
    <location>
        <begin position="1193"/>
        <end position="1247"/>
    </location>
</feature>
<feature type="compositionally biased region" description="Polar residues" evidence="2">
    <location>
        <begin position="738"/>
        <end position="748"/>
    </location>
</feature>
<feature type="compositionally biased region" description="Low complexity" evidence="2">
    <location>
        <begin position="778"/>
        <end position="787"/>
    </location>
</feature>
<feature type="compositionally biased region" description="Basic and acidic residues" evidence="2">
    <location>
        <begin position="1193"/>
        <end position="1202"/>
    </location>
</feature>
<feature type="compositionally biased region" description="Basic residues" evidence="2">
    <location>
        <begin position="1203"/>
        <end position="1212"/>
    </location>
</feature>
<feature type="compositionally biased region" description="Low complexity" evidence="2">
    <location>
        <begin position="1213"/>
        <end position="1236"/>
    </location>
</feature>
<feature type="splice variant" id="VSP_033834" description="In isoform 3 and isoform 4." evidence="8 9">
    <location>
        <begin position="1"/>
        <end position="878"/>
    </location>
</feature>
<feature type="splice variant" id="VSP_033835" description="In isoform 7." evidence="8">
    <location>
        <begin position="1"/>
        <end position="724"/>
    </location>
</feature>
<feature type="splice variant" id="VSP_033836" description="In isoform 5." evidence="10">
    <location>
        <begin position="1"/>
        <end position="608"/>
    </location>
</feature>
<feature type="splice variant" id="VSP_033837" description="In isoform 5." evidence="10">
    <original>RPDQ</original>
    <variation>MCII</variation>
    <location>
        <begin position="609"/>
        <end position="612"/>
    </location>
</feature>
<feature type="splice variant" id="VSP_033838" description="In isoform 2." evidence="8 9">
    <original>PPETVIDQVKRF</original>
    <variation>GTSSHLLLTAAV</variation>
    <location>
        <begin position="613"/>
        <end position="624"/>
    </location>
</feature>
<feature type="splice variant" id="VSP_033839" description="In isoform 2." evidence="8 9">
    <location>
        <begin position="625"/>
        <end position="1294"/>
    </location>
</feature>
<feature type="splice variant" id="VSP_033840" description="In isoform 3 and isoform 4." evidence="8 9">
    <original>VLDKHVVSKVFD</original>
    <variation>MATKGMRLKSTK</variation>
    <location>
        <begin position="879"/>
        <end position="890"/>
    </location>
</feature>
<feature type="splice variant" id="VSP_033841" description="In isoform 8." evidence="10">
    <original>VVKKCVSRTQALVGFSYGDTKVVSTSF</original>
    <variation>SFFFFNFVRLLLNNLILGTRSFNLCFC</variation>
    <location>
        <begin position="1054"/>
        <end position="1080"/>
    </location>
</feature>
<feature type="splice variant" id="VSP_033842" description="In isoform 8." evidence="10">
    <location>
        <begin position="1081"/>
        <end position="1294"/>
    </location>
</feature>
<feature type="splice variant" id="VSP_033843" description="In isoform 4." evidence="8">
    <original>SCQGTHPEPRTAHLHFPAAGRLGLSSHAIIATPPPRAALPCTLQATHSSKGLRSVPETL</original>
    <variation>PPPLPRGRASRTQQPRHHCHTSTSSSPALYSPSHPQQQRAEERP</variation>
    <location>
        <begin position="1236"/>
        <end position="1294"/>
    </location>
</feature>
<feature type="splice variant" id="VSP_033844" description="In isoform 6." evidence="8">
    <original>TAHLHFPAAGRLGLSSHAIIATPPPRAALPCTLQATHSSKGLRSVPETL</original>
    <variation>VWVMGGEHNIAYLRNTLKSLSRIVHLTSSFRFWACLGSSAAKTLTSLSNAELCFPRQPTSTSPRPGV</variation>
    <location>
        <begin position="1246"/>
        <end position="1294"/>
    </location>
</feature>
<feature type="sequence variant" id="VAR_076433" description="In dbSNP:rs200359284." evidence="7">
    <original>L</original>
    <variation>M</variation>
    <location>
        <position position="42"/>
    </location>
</feature>
<feature type="sequence variant" id="VAR_043571" description="In dbSNP:rs2305355." evidence="6">
    <original>R</original>
    <variation>W</variation>
    <location>
        <position position="181"/>
    </location>
</feature>
<feature type="sequence variant" id="VAR_075091" description="In SCAR22; dbSNP:rs876657414." evidence="6">
    <original>K</original>
    <variation>T</variation>
    <location>
        <position position="622"/>
    </location>
</feature>
<feature type="sequence variant" id="VAR_043572" description="In dbSNP:rs7601049." evidence="5">
    <original>L</original>
    <variation>V</variation>
    <location>
        <position position="677"/>
    </location>
</feature>
<feature type="sequence variant" id="VAR_043573" description="In dbSNP:rs11889349." evidence="3 5">
    <original>V</original>
    <variation>M</variation>
    <location>
        <position position="885"/>
    </location>
</feature>
<feature type="sequence variant" id="VAR_057022" description="In dbSNP:rs6731704.">
    <original>I</original>
    <variation>M</variation>
    <location>
        <position position="1103"/>
    </location>
</feature>
<feature type="sequence variant" id="VAR_043574" description="In dbSNP:rs17428626.">
    <original>D</original>
    <variation>E</variation>
    <location>
        <position position="1223"/>
    </location>
</feature>
<feature type="sequence variant" id="VAR_043575" description="In dbSNP:rs7587534." evidence="3 4 5">
    <original>R</original>
    <variation>K</variation>
    <location>
        <position position="1245"/>
    </location>
</feature>
<feature type="sequence variant" id="VAR_043576" description="In dbSNP:rs2271038.">
    <original>T</original>
    <variation>I</variation>
    <location>
        <position position="1277"/>
    </location>
</feature>
<feature type="sequence conflict" description="In Ref. 2; CAD89964." evidence="11" ref="2">
    <original>C</original>
    <variation>R</variation>
    <location>
        <position position="348"/>
    </location>
</feature>
<feature type="sequence conflict" description="In Ref. 2; CAD89964." evidence="11" ref="2">
    <original>R</original>
    <variation>C</variation>
    <location>
        <position position="416"/>
    </location>
</feature>
<feature type="sequence conflict" description="In Ref. 1; BAC04047." evidence="11" ref="1">
    <original>V</original>
    <variation>F</variation>
    <location>
        <position position="617"/>
    </location>
</feature>
<feature type="sequence conflict" description="In Ref. 2; CAD89964." evidence="11" ref="2">
    <original>K</original>
    <variation>R</variation>
    <location>
        <position position="731"/>
    </location>
</feature>
<feature type="sequence conflict" description="In Ref. 2; CAD89964." evidence="11" ref="2">
    <original>F</original>
    <variation>L</variation>
    <location>
        <position position="889"/>
    </location>
</feature>
<feature type="sequence conflict" description="In Ref. 4; AAH22028." evidence="11" ref="4">
    <original>D</original>
    <variation>G</variation>
    <location>
        <position position="1171"/>
    </location>
</feature>
<dbReference type="EMBL" id="AK090786">
    <property type="protein sequence ID" value="BAC03518.1"/>
    <property type="molecule type" value="mRNA"/>
</dbReference>
<dbReference type="EMBL" id="AK093084">
    <property type="protein sequence ID" value="BAC04047.1"/>
    <property type="status" value="ALT_INIT"/>
    <property type="molecule type" value="mRNA"/>
</dbReference>
<dbReference type="EMBL" id="AK098841">
    <property type="protein sequence ID" value="BAC05431.1"/>
    <property type="molecule type" value="mRNA"/>
</dbReference>
<dbReference type="EMBL" id="AK292397">
    <property type="protein sequence ID" value="BAF85086.1"/>
    <property type="molecule type" value="mRNA"/>
</dbReference>
<dbReference type="EMBL" id="AL832635">
    <property type="protein sequence ID" value="CAD89964.1"/>
    <property type="status" value="ALT_FRAME"/>
    <property type="molecule type" value="mRNA"/>
</dbReference>
<dbReference type="EMBL" id="AL834173">
    <property type="protein sequence ID" value="CAD38871.1"/>
    <property type="molecule type" value="mRNA"/>
</dbReference>
<dbReference type="EMBL" id="AL834385">
    <property type="protein sequence ID" value="CAD39048.1"/>
    <property type="molecule type" value="mRNA"/>
</dbReference>
<dbReference type="EMBL" id="AC018691">
    <property type="status" value="NOT_ANNOTATED_CDS"/>
    <property type="molecule type" value="Genomic_DNA"/>
</dbReference>
<dbReference type="EMBL" id="AC092675">
    <property type="status" value="NOT_ANNOTATED_CDS"/>
    <property type="molecule type" value="Genomic_DNA"/>
</dbReference>
<dbReference type="EMBL" id="AC112788">
    <property type="status" value="NOT_ANNOTATED_CDS"/>
    <property type="molecule type" value="Genomic_DNA"/>
</dbReference>
<dbReference type="EMBL" id="BC022028">
    <property type="protein sequence ID" value="AAH22028.1"/>
    <property type="molecule type" value="mRNA"/>
</dbReference>
<dbReference type="EMBL" id="BC095480">
    <property type="protein sequence ID" value="AAH95480.1"/>
    <property type="molecule type" value="mRNA"/>
</dbReference>
<dbReference type="EMBL" id="BC150653">
    <property type="protein sequence ID" value="AAI50654.1"/>
    <property type="molecule type" value="mRNA"/>
</dbReference>
<dbReference type="CCDS" id="CCDS42718.1">
    <molecule id="Q502W6-1"/>
</dbReference>
<dbReference type="RefSeq" id="NP_001332793.1">
    <property type="nucleotide sequence ID" value="NM_001345864.1"/>
</dbReference>
<dbReference type="RefSeq" id="NP_659429.4">
    <molecule id="Q502W6-1"/>
    <property type="nucleotide sequence ID" value="NM_144992.4"/>
</dbReference>
<dbReference type="RefSeq" id="XP_005263954.1">
    <molecule id="Q502W6-6"/>
    <property type="nucleotide sequence ID" value="XM_005263897.3"/>
</dbReference>
<dbReference type="RefSeq" id="XP_047299604.1">
    <molecule id="Q502W6-2"/>
    <property type="nucleotide sequence ID" value="XM_047443648.1"/>
</dbReference>
<dbReference type="RefSeq" id="XP_054196921.1">
    <molecule id="Q502W6-2"/>
    <property type="nucleotide sequence ID" value="XM_054340946.1"/>
</dbReference>
<dbReference type="SMR" id="Q502W6"/>
<dbReference type="BioGRID" id="128324">
    <property type="interactions" value="13"/>
</dbReference>
<dbReference type="FunCoup" id="Q502W6">
    <property type="interactions" value="1187"/>
</dbReference>
<dbReference type="IntAct" id="Q502W6">
    <property type="interactions" value="11"/>
</dbReference>
<dbReference type="STRING" id="9606.ENSP00000417955"/>
<dbReference type="GlyGen" id="Q502W6">
    <property type="glycosylation" value="2 sites, 1 O-linked glycan (1 site)"/>
</dbReference>
<dbReference type="iPTMnet" id="Q502W6"/>
<dbReference type="PhosphoSitePlus" id="Q502W6"/>
<dbReference type="BioMuta" id="VWA3B"/>
<dbReference type="DMDM" id="296439299"/>
<dbReference type="jPOST" id="Q502W6"/>
<dbReference type="MassIVE" id="Q502W6"/>
<dbReference type="PaxDb" id="9606-ENSP00000417955"/>
<dbReference type="PeptideAtlas" id="Q502W6"/>
<dbReference type="ProteomicsDB" id="62390">
    <molecule id="Q502W6-1"/>
</dbReference>
<dbReference type="ProteomicsDB" id="62391">
    <molecule id="Q502W6-2"/>
</dbReference>
<dbReference type="ProteomicsDB" id="62392">
    <molecule id="Q502W6-3"/>
</dbReference>
<dbReference type="ProteomicsDB" id="62393">
    <molecule id="Q502W6-4"/>
</dbReference>
<dbReference type="ProteomicsDB" id="62394">
    <molecule id="Q502W6-5"/>
</dbReference>
<dbReference type="ProteomicsDB" id="62395">
    <molecule id="Q502W6-6"/>
</dbReference>
<dbReference type="ProteomicsDB" id="62396">
    <molecule id="Q502W6-7"/>
</dbReference>
<dbReference type="ProteomicsDB" id="62397">
    <molecule id="Q502W6-8"/>
</dbReference>
<dbReference type="Pumba" id="Q502W6"/>
<dbReference type="Antibodypedia" id="52631">
    <property type="antibodies" value="84 antibodies from 16 providers"/>
</dbReference>
<dbReference type="DNASU" id="200403"/>
<dbReference type="Ensembl" id="ENST00000433678.5">
    <molecule id="Q502W6-2"/>
    <property type="protein sequence ID" value="ENSP00000388158.1"/>
    <property type="gene ID" value="ENSG00000168658.20"/>
</dbReference>
<dbReference type="Ensembl" id="ENST00000477737.6">
    <molecule id="Q502W6-1"/>
    <property type="protein sequence ID" value="ENSP00000417955.1"/>
    <property type="gene ID" value="ENSG00000168658.20"/>
</dbReference>
<dbReference type="GeneID" id="200403"/>
<dbReference type="KEGG" id="hsa:200403"/>
<dbReference type="MANE-Select" id="ENST00000477737.6">
    <property type="protein sequence ID" value="ENSP00000417955.1"/>
    <property type="RefSeq nucleotide sequence ID" value="NM_144992.5"/>
    <property type="RefSeq protein sequence ID" value="NP_659429.4"/>
</dbReference>
<dbReference type="UCSC" id="uc002syo.4">
    <molecule id="Q502W6-1"/>
    <property type="organism name" value="human"/>
</dbReference>
<dbReference type="AGR" id="HGNC:28385"/>
<dbReference type="CTD" id="200403"/>
<dbReference type="DisGeNET" id="200403"/>
<dbReference type="GeneCards" id="VWA3B"/>
<dbReference type="HGNC" id="HGNC:28385">
    <property type="gene designation" value="VWA3B"/>
</dbReference>
<dbReference type="HPA" id="ENSG00000168658">
    <property type="expression patterns" value="Group enriched (choroid plexus, fallopian tube, testis)"/>
</dbReference>
<dbReference type="MalaCards" id="VWA3B"/>
<dbReference type="MIM" id="614884">
    <property type="type" value="gene"/>
</dbReference>
<dbReference type="MIM" id="616948">
    <property type="type" value="phenotype"/>
</dbReference>
<dbReference type="neXtProt" id="NX_Q502W6"/>
<dbReference type="OpenTargets" id="ENSG00000168658"/>
<dbReference type="PharmGKB" id="PA162409004"/>
<dbReference type="VEuPathDB" id="HostDB:ENSG00000168658"/>
<dbReference type="eggNOG" id="ENOG502QV6D">
    <property type="taxonomic scope" value="Eukaryota"/>
</dbReference>
<dbReference type="GeneTree" id="ENSGT00940000157237"/>
<dbReference type="HOGENOM" id="CLU_023600_0_0_1"/>
<dbReference type="InParanoid" id="Q502W6"/>
<dbReference type="OMA" id="VIMDWWY"/>
<dbReference type="OrthoDB" id="10021393at2759"/>
<dbReference type="PAN-GO" id="Q502W6">
    <property type="GO annotations" value="0 GO annotations based on evolutionary models"/>
</dbReference>
<dbReference type="PhylomeDB" id="Q502W6"/>
<dbReference type="TreeFam" id="TF328978"/>
<dbReference type="PathwayCommons" id="Q502W6"/>
<dbReference type="SignaLink" id="Q502W6"/>
<dbReference type="BioGRID-ORCS" id="200403">
    <property type="hits" value="10 hits in 1141 CRISPR screens"/>
</dbReference>
<dbReference type="ChiTaRS" id="VWA3B">
    <property type="organism name" value="human"/>
</dbReference>
<dbReference type="GenomeRNAi" id="200403"/>
<dbReference type="Pharos" id="Q502W6">
    <property type="development level" value="Tdark"/>
</dbReference>
<dbReference type="PRO" id="PR:Q502W6"/>
<dbReference type="Proteomes" id="UP000005640">
    <property type="component" value="Chromosome 2"/>
</dbReference>
<dbReference type="RNAct" id="Q502W6">
    <property type="molecule type" value="protein"/>
</dbReference>
<dbReference type="Bgee" id="ENSG00000168658">
    <property type="expression patterns" value="Expressed in bronchial epithelial cell and 122 other cell types or tissues"/>
</dbReference>
<dbReference type="ExpressionAtlas" id="Q502W6">
    <property type="expression patterns" value="baseline and differential"/>
</dbReference>
<dbReference type="GO" id="GO:0005829">
    <property type="term" value="C:cytosol"/>
    <property type="evidence" value="ECO:0000314"/>
    <property type="project" value="HPA"/>
</dbReference>
<dbReference type="GO" id="GO:0005654">
    <property type="term" value="C:nucleoplasm"/>
    <property type="evidence" value="ECO:0000314"/>
    <property type="project" value="HPA"/>
</dbReference>
<dbReference type="CDD" id="cd00198">
    <property type="entry name" value="vWFA"/>
    <property type="match status" value="1"/>
</dbReference>
<dbReference type="Gene3D" id="3.40.50.410">
    <property type="entry name" value="von Willebrand factor, type A domain"/>
    <property type="match status" value="1"/>
</dbReference>
<dbReference type="InterPro" id="IPR032770">
    <property type="entry name" value="DUF4537"/>
</dbReference>
<dbReference type="InterPro" id="IPR002035">
    <property type="entry name" value="VWF_A"/>
</dbReference>
<dbReference type="InterPro" id="IPR036465">
    <property type="entry name" value="vWFA_dom_sf"/>
</dbReference>
<dbReference type="PANTHER" id="PTHR46785">
    <property type="entry name" value="VON WILLEBRAND FACTOR A DOMAIN-CONTAINING PROTEIN 3B"/>
    <property type="match status" value="1"/>
</dbReference>
<dbReference type="PANTHER" id="PTHR46785:SF1">
    <property type="entry name" value="VON WILLEBRAND FACTOR A DOMAIN-CONTAINING PROTEIN 3B"/>
    <property type="match status" value="1"/>
</dbReference>
<dbReference type="Pfam" id="PF15057">
    <property type="entry name" value="DUF4537"/>
    <property type="match status" value="1"/>
</dbReference>
<dbReference type="Pfam" id="PF13768">
    <property type="entry name" value="VWA_3"/>
    <property type="match status" value="2"/>
</dbReference>
<dbReference type="SMART" id="SM00327">
    <property type="entry name" value="VWA"/>
    <property type="match status" value="1"/>
</dbReference>
<dbReference type="SUPFAM" id="SSF53300">
    <property type="entry name" value="vWA-like"/>
    <property type="match status" value="1"/>
</dbReference>
<dbReference type="PROSITE" id="PS50234">
    <property type="entry name" value="VWFA"/>
    <property type="match status" value="1"/>
</dbReference>
<name>VWA3B_HUMAN</name>